<evidence type="ECO:0000255" key="1">
    <source>
        <dbReference type="HAMAP-Rule" id="MF_01334"/>
    </source>
</evidence>
<evidence type="ECO:0000305" key="2"/>
<gene>
    <name evidence="1" type="primary">rplY</name>
    <name evidence="1" type="synonym">ctc</name>
    <name type="ordered locus">CCA_00820</name>
</gene>
<sequence>MELVVTSRETDKKSLLKKIRQTGGIPAVIYSGGKSLANIVVDAHVFGKFLSSLESGALSSTIFSLSYEGRTIKALVKDIQYQVTSYRVIHLDFEELIEDRDVKLNIPIRCINAVDCVGVKLGGSLRQVIRAMRVVCKPKDIVPCLELDVRSLGLSQTRKLADINIPAGLRPITPLKEVVVTVSRR</sequence>
<comment type="function">
    <text evidence="1">This is one of the proteins that binds to the 5S RNA in the ribosome where it forms part of the central protuberance.</text>
</comment>
<comment type="subunit">
    <text evidence="1">Part of the 50S ribosomal subunit; part of the 5S rRNA/L5/L18/L25 subcomplex. Contacts the 5S rRNA. Binds to the 5S rRNA independently of L5 and L18.</text>
</comment>
<comment type="similarity">
    <text evidence="1">Belongs to the bacterial ribosomal protein bL25 family. CTC subfamily.</text>
</comment>
<feature type="chain" id="PRO_0000181532" description="Large ribosomal subunit protein bL25">
    <location>
        <begin position="1"/>
        <end position="185"/>
    </location>
</feature>
<proteinExistence type="inferred from homology"/>
<accession>Q821W5</accession>
<name>RL25_CHLCV</name>
<organism>
    <name type="scientific">Chlamydia caviae (strain ATCC VR-813 / DSM 19441 / 03DC25 / GPIC)</name>
    <name type="common">Chlamydophila caviae</name>
    <dbReference type="NCBI Taxonomy" id="227941"/>
    <lineage>
        <taxon>Bacteria</taxon>
        <taxon>Pseudomonadati</taxon>
        <taxon>Chlamydiota</taxon>
        <taxon>Chlamydiia</taxon>
        <taxon>Chlamydiales</taxon>
        <taxon>Chlamydiaceae</taxon>
        <taxon>Chlamydia/Chlamydophila group</taxon>
        <taxon>Chlamydia</taxon>
    </lineage>
</organism>
<keyword id="KW-0687">Ribonucleoprotein</keyword>
<keyword id="KW-0689">Ribosomal protein</keyword>
<keyword id="KW-0694">RNA-binding</keyword>
<keyword id="KW-0699">rRNA-binding</keyword>
<protein>
    <recommendedName>
        <fullName evidence="1">Large ribosomal subunit protein bL25</fullName>
    </recommendedName>
    <alternativeName>
        <fullName evidence="2">50S ribosomal protein L25</fullName>
    </alternativeName>
    <alternativeName>
        <fullName evidence="1">General stress protein CTC</fullName>
    </alternativeName>
</protein>
<reference key="1">
    <citation type="journal article" date="2003" name="Nucleic Acids Res.">
        <title>Genome sequence of Chlamydophila caviae (Chlamydia psittaci GPIC): examining the role of niche-specific genes in the evolution of the Chlamydiaceae.</title>
        <authorList>
            <person name="Read T.D."/>
            <person name="Myers G.S.A."/>
            <person name="Brunham R.C."/>
            <person name="Nelson W.C."/>
            <person name="Paulsen I.T."/>
            <person name="Heidelberg J.F."/>
            <person name="Holtzapple E.K."/>
            <person name="Khouri H.M."/>
            <person name="Federova N.B."/>
            <person name="Carty H.A."/>
            <person name="Umayam L.A."/>
            <person name="Haft D.H."/>
            <person name="Peterson J.D."/>
            <person name="Beanan M.J."/>
            <person name="White O."/>
            <person name="Salzberg S.L."/>
            <person name="Hsia R.-C."/>
            <person name="McClarty G."/>
            <person name="Rank R.G."/>
            <person name="Bavoil P.M."/>
            <person name="Fraser C.M."/>
        </authorList>
    </citation>
    <scope>NUCLEOTIDE SEQUENCE [LARGE SCALE GENOMIC DNA]</scope>
    <source>
        <strain>ATCC VR-813 / DSM 19441 / 03DC25 / GPIC</strain>
    </source>
</reference>
<dbReference type="EMBL" id="AE015925">
    <property type="protein sequence ID" value="AAP05561.1"/>
    <property type="molecule type" value="Genomic_DNA"/>
</dbReference>
<dbReference type="RefSeq" id="WP_011006775.1">
    <property type="nucleotide sequence ID" value="NC_003361.3"/>
</dbReference>
<dbReference type="SMR" id="Q821W5"/>
<dbReference type="STRING" id="227941.CCA_00820"/>
<dbReference type="KEGG" id="cca:CCA_00820"/>
<dbReference type="eggNOG" id="COG1825">
    <property type="taxonomic scope" value="Bacteria"/>
</dbReference>
<dbReference type="HOGENOM" id="CLU_075939_2_1_0"/>
<dbReference type="OrthoDB" id="17764at2"/>
<dbReference type="Proteomes" id="UP000002193">
    <property type="component" value="Chromosome"/>
</dbReference>
<dbReference type="GO" id="GO:0022625">
    <property type="term" value="C:cytosolic large ribosomal subunit"/>
    <property type="evidence" value="ECO:0007669"/>
    <property type="project" value="TreeGrafter"/>
</dbReference>
<dbReference type="GO" id="GO:0008097">
    <property type="term" value="F:5S rRNA binding"/>
    <property type="evidence" value="ECO:0007669"/>
    <property type="project" value="InterPro"/>
</dbReference>
<dbReference type="GO" id="GO:0003735">
    <property type="term" value="F:structural constituent of ribosome"/>
    <property type="evidence" value="ECO:0007669"/>
    <property type="project" value="InterPro"/>
</dbReference>
<dbReference type="GO" id="GO:0006412">
    <property type="term" value="P:translation"/>
    <property type="evidence" value="ECO:0007669"/>
    <property type="project" value="UniProtKB-UniRule"/>
</dbReference>
<dbReference type="CDD" id="cd00495">
    <property type="entry name" value="Ribosomal_L25_TL5_CTC"/>
    <property type="match status" value="1"/>
</dbReference>
<dbReference type="Gene3D" id="2.170.120.20">
    <property type="entry name" value="Ribosomal protein L25, beta domain"/>
    <property type="match status" value="1"/>
</dbReference>
<dbReference type="Gene3D" id="2.40.240.10">
    <property type="entry name" value="Ribosomal Protein L25, Chain P"/>
    <property type="match status" value="1"/>
</dbReference>
<dbReference type="HAMAP" id="MF_01334">
    <property type="entry name" value="Ribosomal_bL25_CTC"/>
    <property type="match status" value="1"/>
</dbReference>
<dbReference type="InterPro" id="IPR020056">
    <property type="entry name" value="Rbsml_bL25/Gln-tRNA_synth_N"/>
</dbReference>
<dbReference type="InterPro" id="IPR011035">
    <property type="entry name" value="Ribosomal_bL25/Gln-tRNA_synth"/>
</dbReference>
<dbReference type="InterPro" id="IPR020057">
    <property type="entry name" value="Ribosomal_bL25_b-dom"/>
</dbReference>
<dbReference type="InterPro" id="IPR037121">
    <property type="entry name" value="Ribosomal_bL25_C"/>
</dbReference>
<dbReference type="InterPro" id="IPR001021">
    <property type="entry name" value="Ribosomal_bL25_long"/>
</dbReference>
<dbReference type="InterPro" id="IPR029751">
    <property type="entry name" value="Ribosomal_L25_dom"/>
</dbReference>
<dbReference type="InterPro" id="IPR020930">
    <property type="entry name" value="Ribosomal_uL5_bac-type"/>
</dbReference>
<dbReference type="NCBIfam" id="TIGR00731">
    <property type="entry name" value="bL25_bact_ctc"/>
    <property type="match status" value="1"/>
</dbReference>
<dbReference type="NCBIfam" id="NF004129">
    <property type="entry name" value="PRK05618.1-4"/>
    <property type="match status" value="1"/>
</dbReference>
<dbReference type="PANTHER" id="PTHR33284">
    <property type="entry name" value="RIBOSOMAL PROTEIN L25/GLN-TRNA SYNTHETASE, ANTI-CODON-BINDING DOMAIN-CONTAINING PROTEIN"/>
    <property type="match status" value="1"/>
</dbReference>
<dbReference type="PANTHER" id="PTHR33284:SF1">
    <property type="entry name" value="RIBOSOMAL PROTEIN L25_GLN-TRNA SYNTHETASE, ANTI-CODON-BINDING DOMAIN-CONTAINING PROTEIN"/>
    <property type="match status" value="1"/>
</dbReference>
<dbReference type="Pfam" id="PF01386">
    <property type="entry name" value="Ribosomal_L25p"/>
    <property type="match status" value="1"/>
</dbReference>
<dbReference type="Pfam" id="PF14693">
    <property type="entry name" value="Ribosomal_TL5_C"/>
    <property type="match status" value="1"/>
</dbReference>
<dbReference type="SUPFAM" id="SSF50715">
    <property type="entry name" value="Ribosomal protein L25-like"/>
    <property type="match status" value="1"/>
</dbReference>